<gene>
    <name evidence="1" type="primary">ygfZ</name>
    <name type="ordered locus">STM3048</name>
</gene>
<dbReference type="EMBL" id="AE006468">
    <property type="protein sequence ID" value="AAL21923.1"/>
    <property type="molecule type" value="Genomic_DNA"/>
</dbReference>
<dbReference type="RefSeq" id="NP_461964.1">
    <property type="nucleotide sequence ID" value="NC_003197.2"/>
</dbReference>
<dbReference type="RefSeq" id="WP_000874172.1">
    <property type="nucleotide sequence ID" value="NC_003197.2"/>
</dbReference>
<dbReference type="SMR" id="Q8ZM80"/>
<dbReference type="STRING" id="99287.STM3048"/>
<dbReference type="PaxDb" id="99287-STM3048"/>
<dbReference type="GeneID" id="1254571"/>
<dbReference type="KEGG" id="stm:STM3048"/>
<dbReference type="PATRIC" id="fig|99287.12.peg.3229"/>
<dbReference type="HOGENOM" id="CLU_007884_6_1_6"/>
<dbReference type="OMA" id="FVPQMLN"/>
<dbReference type="PhylomeDB" id="Q8ZM80"/>
<dbReference type="BioCyc" id="SENT99287:STM3048-MONOMER"/>
<dbReference type="Proteomes" id="UP000001014">
    <property type="component" value="Chromosome"/>
</dbReference>
<dbReference type="GO" id="GO:0005737">
    <property type="term" value="C:cytoplasm"/>
    <property type="evidence" value="ECO:0007669"/>
    <property type="project" value="UniProtKB-SubCell"/>
</dbReference>
<dbReference type="GO" id="GO:0005542">
    <property type="term" value="F:folic acid binding"/>
    <property type="evidence" value="ECO:0007669"/>
    <property type="project" value="UniProtKB-UniRule"/>
</dbReference>
<dbReference type="GO" id="GO:0016226">
    <property type="term" value="P:iron-sulfur cluster assembly"/>
    <property type="evidence" value="ECO:0000318"/>
    <property type="project" value="GO_Central"/>
</dbReference>
<dbReference type="GO" id="GO:0009451">
    <property type="term" value="P:RNA modification"/>
    <property type="evidence" value="ECO:0007669"/>
    <property type="project" value="InterPro"/>
</dbReference>
<dbReference type="GO" id="GO:0008033">
    <property type="term" value="P:tRNA processing"/>
    <property type="evidence" value="ECO:0007669"/>
    <property type="project" value="UniProtKB-UniRule"/>
</dbReference>
<dbReference type="FunFam" id="2.40.30.160:FF:000001">
    <property type="entry name" value="tRNA-modifying protein YgfZ"/>
    <property type="match status" value="1"/>
</dbReference>
<dbReference type="FunFam" id="3.30.70.1400:FF:000002">
    <property type="entry name" value="tRNA-modifying protein YgfZ"/>
    <property type="match status" value="1"/>
</dbReference>
<dbReference type="FunFam" id="3.30.70.1630:FF:000001">
    <property type="entry name" value="tRNA-modifying protein YgfZ"/>
    <property type="match status" value="1"/>
</dbReference>
<dbReference type="Gene3D" id="2.40.30.160">
    <property type="match status" value="1"/>
</dbReference>
<dbReference type="Gene3D" id="3.30.70.1630">
    <property type="match status" value="1"/>
</dbReference>
<dbReference type="Gene3D" id="3.30.70.1400">
    <property type="entry name" value="Aminomethyltransferase beta-barrel domains"/>
    <property type="match status" value="1"/>
</dbReference>
<dbReference type="HAMAP" id="MF_01175">
    <property type="entry name" value="tRNA_modifying_YgfZ"/>
    <property type="match status" value="1"/>
</dbReference>
<dbReference type="InterPro" id="IPR029043">
    <property type="entry name" value="GcvT/YgfZ_C"/>
</dbReference>
<dbReference type="InterPro" id="IPR023758">
    <property type="entry name" value="tRNA-modifying_YgfZ"/>
</dbReference>
<dbReference type="InterPro" id="IPR045179">
    <property type="entry name" value="YgfZ/GcvT"/>
</dbReference>
<dbReference type="InterPro" id="IPR017703">
    <property type="entry name" value="YgfZ/GcvT_CS"/>
</dbReference>
<dbReference type="InterPro" id="IPR048451">
    <property type="entry name" value="YgfZ_barrel"/>
</dbReference>
<dbReference type="NCBIfam" id="NF007110">
    <property type="entry name" value="PRK09559.1"/>
    <property type="match status" value="1"/>
</dbReference>
<dbReference type="NCBIfam" id="TIGR03317">
    <property type="entry name" value="ygfZ_signature"/>
    <property type="match status" value="1"/>
</dbReference>
<dbReference type="PANTHER" id="PTHR22602">
    <property type="entry name" value="TRANSFERASE CAF17, MITOCHONDRIAL-RELATED"/>
    <property type="match status" value="1"/>
</dbReference>
<dbReference type="PANTHER" id="PTHR22602:SF0">
    <property type="entry name" value="TRANSFERASE CAF17, MITOCHONDRIAL-RELATED"/>
    <property type="match status" value="1"/>
</dbReference>
<dbReference type="Pfam" id="PF21130">
    <property type="entry name" value="YgfZ_barrel"/>
    <property type="match status" value="1"/>
</dbReference>
<dbReference type="SUPFAM" id="SSF101790">
    <property type="entry name" value="Aminomethyltransferase beta-barrel domain"/>
    <property type="match status" value="1"/>
</dbReference>
<dbReference type="SUPFAM" id="SSF103025">
    <property type="entry name" value="Folate-binding domain"/>
    <property type="match status" value="1"/>
</dbReference>
<name>YGFZ_SALTY</name>
<organism>
    <name type="scientific">Salmonella typhimurium (strain LT2 / SGSC1412 / ATCC 700720)</name>
    <dbReference type="NCBI Taxonomy" id="99287"/>
    <lineage>
        <taxon>Bacteria</taxon>
        <taxon>Pseudomonadati</taxon>
        <taxon>Pseudomonadota</taxon>
        <taxon>Gammaproteobacteria</taxon>
        <taxon>Enterobacterales</taxon>
        <taxon>Enterobacteriaceae</taxon>
        <taxon>Salmonella</taxon>
    </lineage>
</organism>
<comment type="function">
    <text evidence="1">Folate-binding protein involved in regulating the level of ATP-DnaA and in the modification of some tRNAs. It is probably a key factor in regulatory networks that act via tRNA modification, such as initiation of chromosomal replication.</text>
</comment>
<comment type="subcellular location">
    <subcellularLocation>
        <location evidence="1">Cytoplasm</location>
    </subcellularLocation>
</comment>
<comment type="similarity">
    <text evidence="1">Belongs to the tRNA-modifying YgfZ family.</text>
</comment>
<feature type="chain" id="PRO_0000262898" description="tRNA-modifying protein YgfZ">
    <location>
        <begin position="1"/>
        <end position="326"/>
    </location>
</feature>
<feature type="binding site" evidence="1">
    <location>
        <position position="27"/>
    </location>
    <ligand>
        <name>folate</name>
        <dbReference type="ChEBI" id="CHEBI:62501"/>
    </ligand>
</feature>
<feature type="binding site" evidence="1">
    <location>
        <position position="189"/>
    </location>
    <ligand>
        <name>folate</name>
        <dbReference type="ChEBI" id="CHEBI:62501"/>
    </ligand>
</feature>
<keyword id="KW-0963">Cytoplasm</keyword>
<keyword id="KW-0290">Folate-binding</keyword>
<keyword id="KW-1185">Reference proteome</keyword>
<keyword id="KW-0819">tRNA processing</keyword>
<evidence type="ECO:0000255" key="1">
    <source>
        <dbReference type="HAMAP-Rule" id="MF_01175"/>
    </source>
</evidence>
<sequence>MAFISFPPRHPSSSARLPLTLIALDDWALSTITGVDSEKYIQGQVTADVSQMTEQQHLLAAHCDAKGKMWSTLRLFRERDGFAWIERRSVLEAQLTELKKYAVFSKVVIAPDDERVLLGVAGFQARAALANVFSELPNSENQVVRDGASTLLWFEHPAERFLLVTDVATANMLTEKLHGEAELNNSQQWLALDIEAGIPVIDAANSGQFIPQATNLQALGGISFKKGCYTGQEMVARAKFRGANKRALWLLAGKASRVPEAGEDLELQMGENWRRTGAILAATQLDDGQLLVQAVMNNDLEAESVFRVRDDANTLHIVPLPYSLEE</sequence>
<proteinExistence type="inferred from homology"/>
<reference key="1">
    <citation type="journal article" date="2001" name="Nature">
        <title>Complete genome sequence of Salmonella enterica serovar Typhimurium LT2.</title>
        <authorList>
            <person name="McClelland M."/>
            <person name="Sanderson K.E."/>
            <person name="Spieth J."/>
            <person name="Clifton S.W."/>
            <person name="Latreille P."/>
            <person name="Courtney L."/>
            <person name="Porwollik S."/>
            <person name="Ali J."/>
            <person name="Dante M."/>
            <person name="Du F."/>
            <person name="Hou S."/>
            <person name="Layman D."/>
            <person name="Leonard S."/>
            <person name="Nguyen C."/>
            <person name="Scott K."/>
            <person name="Holmes A."/>
            <person name="Grewal N."/>
            <person name="Mulvaney E."/>
            <person name="Ryan E."/>
            <person name="Sun H."/>
            <person name="Florea L."/>
            <person name="Miller W."/>
            <person name="Stoneking T."/>
            <person name="Nhan M."/>
            <person name="Waterston R."/>
            <person name="Wilson R.K."/>
        </authorList>
    </citation>
    <scope>NUCLEOTIDE SEQUENCE [LARGE SCALE GENOMIC DNA]</scope>
    <source>
        <strain>LT2 / SGSC1412 / ATCC 700720</strain>
    </source>
</reference>
<protein>
    <recommendedName>
        <fullName evidence="1">tRNA-modifying protein YgfZ</fullName>
    </recommendedName>
</protein>
<accession>Q8ZM80</accession>